<evidence type="ECO:0000250" key="1">
    <source>
        <dbReference type="UniProtKB" id="P36877"/>
    </source>
</evidence>
<evidence type="ECO:0000250" key="2">
    <source>
        <dbReference type="UniProtKB" id="P56932"/>
    </source>
</evidence>
<evidence type="ECO:0000250" key="3">
    <source>
        <dbReference type="UniProtKB" id="Q66LE6"/>
    </source>
</evidence>
<evidence type="ECO:0000250" key="4">
    <source>
        <dbReference type="UniProtKB" id="Q7ZX64"/>
    </source>
</evidence>
<evidence type="ECO:0000269" key="5">
    <source>
    </source>
</evidence>
<evidence type="ECO:0000303" key="6">
    <source>
    </source>
</evidence>
<evidence type="ECO:0000303" key="7">
    <source>
    </source>
</evidence>
<evidence type="ECO:0000305" key="8"/>
<evidence type="ECO:0000312" key="9">
    <source>
        <dbReference type="MGI" id="MGI:1289252"/>
    </source>
</evidence>
<dbReference type="EMBL" id="AF366393">
    <property type="protein sequence ID" value="AAK53703.1"/>
    <property type="molecule type" value="mRNA"/>
</dbReference>
<dbReference type="EMBL" id="AK129386">
    <property type="protein sequence ID" value="BAC98196.2"/>
    <property type="status" value="ALT_INIT"/>
    <property type="molecule type" value="mRNA"/>
</dbReference>
<dbReference type="EMBL" id="BC066022">
    <property type="protein sequence ID" value="AAH66022.1"/>
    <property type="molecule type" value="mRNA"/>
</dbReference>
<dbReference type="CCDS" id="CCDS21950.1"/>
<dbReference type="RefSeq" id="NP_080667.1">
    <property type="nucleotide sequence ID" value="NM_026391.2"/>
</dbReference>
<dbReference type="SMR" id="Q925E7"/>
<dbReference type="BioGRID" id="206582">
    <property type="interactions" value="43"/>
</dbReference>
<dbReference type="FunCoup" id="Q925E7">
    <property type="interactions" value="1515"/>
</dbReference>
<dbReference type="IntAct" id="Q925E7">
    <property type="interactions" value="15"/>
</dbReference>
<dbReference type="MINT" id="Q925E7"/>
<dbReference type="STRING" id="10090.ENSMUSP00000040321"/>
<dbReference type="GlyGen" id="Q925E7">
    <property type="glycosylation" value="1 site, 1 O-linked glycan (1 site)"/>
</dbReference>
<dbReference type="iPTMnet" id="Q925E7"/>
<dbReference type="PhosphoSitePlus" id="Q925E7"/>
<dbReference type="SwissPalm" id="Q925E7"/>
<dbReference type="jPOST" id="Q925E7"/>
<dbReference type="PaxDb" id="10090-ENSMUSP00000040321"/>
<dbReference type="PeptideAtlas" id="Q925E7"/>
<dbReference type="ProteomicsDB" id="285532"/>
<dbReference type="Pumba" id="Q925E7"/>
<dbReference type="Antibodypedia" id="55293">
    <property type="antibodies" value="56 antibodies from 14 providers"/>
</dbReference>
<dbReference type="DNASU" id="52432"/>
<dbReference type="Ensembl" id="ENSMUST00000041097.13">
    <property type="protein sequence ID" value="ENSMUSP00000040321.7"/>
    <property type="gene ID" value="ENSMUSG00000041769.14"/>
</dbReference>
<dbReference type="GeneID" id="52432"/>
<dbReference type="KEGG" id="mmu:52432"/>
<dbReference type="UCSC" id="uc009kfe.1">
    <property type="organism name" value="mouse"/>
</dbReference>
<dbReference type="AGR" id="MGI:1289252"/>
<dbReference type="CTD" id="55844"/>
<dbReference type="MGI" id="MGI:1289252">
    <property type="gene designation" value="Ppp2r2d"/>
</dbReference>
<dbReference type="VEuPathDB" id="HostDB:ENSMUSG00000041769"/>
<dbReference type="eggNOG" id="KOG1354">
    <property type="taxonomic scope" value="Eukaryota"/>
</dbReference>
<dbReference type="GeneTree" id="ENSGT00950000182864"/>
<dbReference type="HOGENOM" id="CLU_021713_3_3_1"/>
<dbReference type="InParanoid" id="Q925E7"/>
<dbReference type="OMA" id="LSHHDTI"/>
<dbReference type="OrthoDB" id="6274823at2759"/>
<dbReference type="PhylomeDB" id="Q925E7"/>
<dbReference type="TreeFam" id="TF105553"/>
<dbReference type="BioGRID-ORCS" id="52432">
    <property type="hits" value="1 hit in 79 CRISPR screens"/>
</dbReference>
<dbReference type="ChiTaRS" id="Ppp2r2d">
    <property type="organism name" value="mouse"/>
</dbReference>
<dbReference type="PRO" id="PR:Q925E7"/>
<dbReference type="Proteomes" id="UP000000589">
    <property type="component" value="Chromosome 7"/>
</dbReference>
<dbReference type="RNAct" id="Q925E7">
    <property type="molecule type" value="protein"/>
</dbReference>
<dbReference type="Bgee" id="ENSMUSG00000041769">
    <property type="expression patterns" value="Expressed in internal carotid artery and 258 other cell types or tissues"/>
</dbReference>
<dbReference type="ExpressionAtlas" id="Q925E7">
    <property type="expression patterns" value="baseline and differential"/>
</dbReference>
<dbReference type="GO" id="GO:0005737">
    <property type="term" value="C:cytoplasm"/>
    <property type="evidence" value="ECO:0007669"/>
    <property type="project" value="UniProtKB-SubCell"/>
</dbReference>
<dbReference type="GO" id="GO:0000159">
    <property type="term" value="C:protein phosphatase type 2A complex"/>
    <property type="evidence" value="ECO:0000314"/>
    <property type="project" value="UniProtKB"/>
</dbReference>
<dbReference type="GO" id="GO:0140767">
    <property type="term" value="F:enzyme-substrate adaptor activity"/>
    <property type="evidence" value="ECO:0000314"/>
    <property type="project" value="UniProtKB"/>
</dbReference>
<dbReference type="GO" id="GO:0019888">
    <property type="term" value="F:protein phosphatase regulator activity"/>
    <property type="evidence" value="ECO:0000314"/>
    <property type="project" value="UniProtKB"/>
</dbReference>
<dbReference type="GO" id="GO:0051301">
    <property type="term" value="P:cell division"/>
    <property type="evidence" value="ECO:0007669"/>
    <property type="project" value="UniProtKB-KW"/>
</dbReference>
<dbReference type="GO" id="GO:0010458">
    <property type="term" value="P:exit from mitosis"/>
    <property type="evidence" value="ECO:0000250"/>
    <property type="project" value="UniProtKB"/>
</dbReference>
<dbReference type="GO" id="GO:0000278">
    <property type="term" value="P:mitotic cell cycle"/>
    <property type="evidence" value="ECO:0000250"/>
    <property type="project" value="UniProtKB"/>
</dbReference>
<dbReference type="GO" id="GO:0051983">
    <property type="term" value="P:regulation of chromosome segregation"/>
    <property type="evidence" value="ECO:0000314"/>
    <property type="project" value="UniProtKB"/>
</dbReference>
<dbReference type="FunFam" id="2.130.10.10:FF:000002">
    <property type="entry name" value="Serine/threonine-protein phosphatase 2A 55 kDa regulatory subunit B"/>
    <property type="match status" value="1"/>
</dbReference>
<dbReference type="Gene3D" id="2.130.10.10">
    <property type="entry name" value="YVTN repeat-like/Quinoprotein amine dehydrogenase"/>
    <property type="match status" value="1"/>
</dbReference>
<dbReference type="InterPro" id="IPR000009">
    <property type="entry name" value="PP2A_PR55"/>
</dbReference>
<dbReference type="InterPro" id="IPR018067">
    <property type="entry name" value="PP2A_PR55_CS"/>
</dbReference>
<dbReference type="InterPro" id="IPR015943">
    <property type="entry name" value="WD40/YVTN_repeat-like_dom_sf"/>
</dbReference>
<dbReference type="InterPro" id="IPR036322">
    <property type="entry name" value="WD40_repeat_dom_sf"/>
</dbReference>
<dbReference type="InterPro" id="IPR001680">
    <property type="entry name" value="WD40_rpt"/>
</dbReference>
<dbReference type="PANTHER" id="PTHR11871">
    <property type="entry name" value="PROTEIN PHOSPHATASE PP2A REGULATORY SUBUNIT B"/>
    <property type="match status" value="1"/>
</dbReference>
<dbReference type="PIRSF" id="PIRSF037309">
    <property type="entry name" value="PP2A_PR55"/>
    <property type="match status" value="1"/>
</dbReference>
<dbReference type="PRINTS" id="PR00600">
    <property type="entry name" value="PP2APR55"/>
</dbReference>
<dbReference type="SMART" id="SM00320">
    <property type="entry name" value="WD40"/>
    <property type="match status" value="7"/>
</dbReference>
<dbReference type="SUPFAM" id="SSF50978">
    <property type="entry name" value="WD40 repeat-like"/>
    <property type="match status" value="1"/>
</dbReference>
<dbReference type="PROSITE" id="PS01024">
    <property type="entry name" value="PR55_1"/>
    <property type="match status" value="1"/>
</dbReference>
<dbReference type="PROSITE" id="PS01025">
    <property type="entry name" value="PR55_2"/>
    <property type="match status" value="1"/>
</dbReference>
<sequence>MAGAGGGGCPAGGNDFQWCFSQVKGAVDEDVAEADIISTVEFNYSGDLLATGDKGGRVVIFQREQENKGRAHSRGEYNVYSTFQSHEPEFDYLKSLEIEEKINKIRWLPQQNAAHFLLSTNDKTIKLWKISERDKRAEGYNLKDEDGRLRDPFRITALRVPILKPMDLMVEASPRRIFANAHTYHINSISVNSDHETYLSADDLRINLWHLEITDRSFNIVDIKPANMEELTEVITAAEFHPHQCNVFVYSSSKGTIRLCDMRSSALCDRHAKFFEEPEDPSSRSFFSEIISSISDVKFSHSGRYMMTRDYLSVKVWDLNMEGRPVETHQVHEYLRSKLCSLYENDCIFDKFECCWNGSDSAIMTGSYNNFFRMFDRNTRRDVTLEASRENSKPRASLKPRKVCTGGKRKKDEISVDSLDFNKKILHTAWHPMESIIAVAATNNLYIFQDKIN</sequence>
<gene>
    <name evidence="7 9" type="primary">Ppp2r2d</name>
    <name type="synonym">D7Ertd753e</name>
    <name evidence="6" type="synonym">Kiaa1541</name>
</gene>
<comment type="function">
    <text evidence="4 5">Substrate-recognition subunit of protein phosphatase 2A (PP2A) that plays a key role in cell cycle by controlling mitosis entry and exit (PubMed:39003739). Involved in chromosome clustering during late mitosis by mediating dephosphorylation of MKI67 (PubMed:39003739). The activity of PP2A complexes containing PPP2R2D (PR55-delta) fluctuate during the cell cycle: the activity is high in interphase and low in mitosis (By similarity).</text>
</comment>
<comment type="subunit">
    <text evidence="3 4">PP2A consists of a common heterodimeric core enzyme, composed of a 36 kDa catalytic subunit (subunit C) and a 65 kDa constant regulatory subunit (PR65 or subunit A), that associates with a variety of regulatory subunits (By similarity). Proteins that associate with the core dimer include three families of regulatory subunits B (the R2/B/PR55/B55, R3/B''/PR72/PR130/PR59 and R5/B'/B56 families), the 48 kDa variable regulatory subunit, viral proteins, and cell signaling molecules (By similarity). Interacts with IER5 (By similarity).</text>
</comment>
<comment type="subcellular location">
    <subcellularLocation>
        <location evidence="2">Cytoplasm</location>
    </subcellularLocation>
</comment>
<comment type="disruption phenotype">
    <text evidence="5">Mice are viable and were born at the expected Mendelian ratio (PubMed:39003739). Mitotic cells display increased chromosome scattering, associated with in the presence of enhanced phosphorylation and perichromosomal loading of Mki67 (PubMed:39003739).</text>
</comment>
<comment type="similarity">
    <text evidence="8">Belongs to the phosphatase 2A regulatory subunit B family.</text>
</comment>
<comment type="sequence caution" evidence="8">
    <conflict type="erroneous initiation">
        <sequence resource="EMBL-CDS" id="BAC98196"/>
    </conflict>
</comment>
<protein>
    <recommendedName>
        <fullName>Serine/threonine-protein phosphatase 2A 55 kDa regulatory subunit B delta isoform</fullName>
    </recommendedName>
    <alternativeName>
        <fullName evidence="7">PP2A subunit B isoform B55-delta</fullName>
    </alternativeName>
    <alternativeName>
        <fullName evidence="7">PP2A subunit B isoform PR55-delta</fullName>
    </alternativeName>
    <alternativeName>
        <fullName>PP2A subunit B isoform R2-delta</fullName>
    </alternativeName>
    <alternativeName>
        <fullName>PP2A subunit B isoform delta</fullName>
    </alternativeName>
</protein>
<accession>Q925E7</accession>
<accession>Q6ZPN5</accession>
<organism>
    <name type="scientific">Mus musculus</name>
    <name type="common">Mouse</name>
    <dbReference type="NCBI Taxonomy" id="10090"/>
    <lineage>
        <taxon>Eukaryota</taxon>
        <taxon>Metazoa</taxon>
        <taxon>Chordata</taxon>
        <taxon>Craniata</taxon>
        <taxon>Vertebrata</taxon>
        <taxon>Euteleostomi</taxon>
        <taxon>Mammalia</taxon>
        <taxon>Eutheria</taxon>
        <taxon>Euarchontoglires</taxon>
        <taxon>Glires</taxon>
        <taxon>Rodentia</taxon>
        <taxon>Myomorpha</taxon>
        <taxon>Muroidea</taxon>
        <taxon>Muridae</taxon>
        <taxon>Murinae</taxon>
        <taxon>Mus</taxon>
        <taxon>Mus</taxon>
    </lineage>
</organism>
<feature type="chain" id="PRO_0000071434" description="Serine/threonine-protein phosphatase 2A 55 kDa regulatory subunit B delta isoform">
    <location>
        <begin position="1"/>
        <end position="453"/>
    </location>
</feature>
<feature type="repeat" description="WD 1">
    <location>
        <begin position="32"/>
        <end position="71"/>
    </location>
</feature>
<feature type="repeat" description="WD 2">
    <location>
        <begin position="97"/>
        <end position="138"/>
    </location>
</feature>
<feature type="repeat" description="WD 3">
    <location>
        <begin position="181"/>
        <end position="219"/>
    </location>
</feature>
<feature type="repeat" description="WD 4">
    <location>
        <begin position="230"/>
        <end position="270"/>
    </location>
</feature>
<feature type="repeat" description="WD 5">
    <location>
        <begin position="289"/>
        <end position="327"/>
    </location>
</feature>
<feature type="repeat" description="WD 6">
    <location>
        <begin position="344"/>
        <end position="385"/>
    </location>
</feature>
<feature type="repeat" description="WD 7">
    <location>
        <begin position="420"/>
        <end position="452"/>
    </location>
</feature>
<feature type="modified residue" description="Phosphoserine" evidence="1">
    <location>
        <position position="285"/>
    </location>
</feature>
<feature type="modified residue" description="Phosphotyrosine" evidence="1">
    <location>
        <position position="305"/>
    </location>
</feature>
<feature type="modified residue" description="Phosphothreonine" evidence="1">
    <location>
        <position position="308"/>
    </location>
</feature>
<proteinExistence type="evidence at protein level"/>
<reference key="1">
    <citation type="submission" date="2001-03" db="EMBL/GenBank/DDBJ databases">
        <title>Analysis of mDRA (Mouse Down-regulated in Adenoma) interaction in yeast two-hybrid system.</title>
        <authorList>
            <person name="Chang H."/>
            <person name="Lee S."/>
            <person name="Park K."/>
        </authorList>
    </citation>
    <scope>NUCLEOTIDE SEQUENCE [MRNA]</scope>
    <source>
        <strain>C57BL/6J</strain>
    </source>
</reference>
<reference key="2">
    <citation type="journal article" date="2003" name="DNA Res.">
        <title>Prediction of the coding sequences of mouse homologues of KIAA gene: III. The complete nucleotide sequences of 500 mouse KIAA-homologous cDNAs identified by screening of terminal sequences of cDNA clones randomly sampled from size-fractionated libraries.</title>
        <authorList>
            <person name="Okazaki N."/>
            <person name="Kikuno R."/>
            <person name="Ohara R."/>
            <person name="Inamoto S."/>
            <person name="Koseki H."/>
            <person name="Hiraoka S."/>
            <person name="Saga Y."/>
            <person name="Nagase T."/>
            <person name="Ohara O."/>
            <person name="Koga H."/>
        </authorList>
    </citation>
    <scope>NUCLEOTIDE SEQUENCE [LARGE SCALE MRNA]</scope>
    <source>
        <tissue>Natural killer cell</tissue>
    </source>
</reference>
<reference key="3">
    <citation type="submission" date="2004-06" db="EMBL/GenBank/DDBJ databases">
        <authorList>
            <person name="Okazaki N."/>
            <person name="Kikuno R."/>
            <person name="Nagase T."/>
            <person name="Ohara O."/>
            <person name="Koga H."/>
        </authorList>
    </citation>
    <scope>SEQUENCE REVISION</scope>
</reference>
<reference key="4">
    <citation type="journal article" date="2004" name="Genome Res.">
        <title>The status, quality, and expansion of the NIH full-length cDNA project: the Mammalian Gene Collection (MGC).</title>
        <authorList>
            <consortium name="The MGC Project Team"/>
        </authorList>
    </citation>
    <scope>NUCLEOTIDE SEQUENCE [LARGE SCALE MRNA]</scope>
    <source>
        <strain>C57BL/6J</strain>
        <tissue>Brain</tissue>
    </source>
</reference>
<reference key="5">
    <citation type="journal article" date="2010" name="Cell">
        <title>A tissue-specific atlas of mouse protein phosphorylation and expression.</title>
        <authorList>
            <person name="Huttlin E.L."/>
            <person name="Jedrychowski M.P."/>
            <person name="Elias J.E."/>
            <person name="Goswami T."/>
            <person name="Rad R."/>
            <person name="Beausoleil S.A."/>
            <person name="Villen J."/>
            <person name="Haas W."/>
            <person name="Sowa M.E."/>
            <person name="Gygi S.P."/>
        </authorList>
    </citation>
    <scope>IDENTIFICATION BY MASS SPECTROMETRY [LARGE SCALE ANALYSIS]</scope>
    <source>
        <tissue>Brain</tissue>
        <tissue>Kidney</tissue>
        <tissue>Spleen</tissue>
    </source>
</reference>
<reference key="6">
    <citation type="journal article" date="2024" name="Cell Rep.">
        <title>PP2A-B55 phosphatase counteracts Ki-67-dependent chromosome individualization during mitosis.</title>
        <authorList>
            <person name="Sanz-Flores M."/>
            <person name="Ruiz-Torres M."/>
            <person name="Aguirre-Portoles C."/>
            <person name="El Bakkali A."/>
            <person name="Salvador-Barbero B."/>
            <person name="Villarroya-Beltri C."/>
            <person name="Ortega S."/>
            <person name="Megias D."/>
            <person name="Gerlich D.W."/>
            <person name="Alvarez-Fernandez M."/>
            <person name="Malumbres M."/>
        </authorList>
    </citation>
    <scope>FUNCTION</scope>
    <scope>DISRUPTION PHENOTYPE</scope>
</reference>
<keyword id="KW-0131">Cell cycle</keyword>
<keyword id="KW-0132">Cell division</keyword>
<keyword id="KW-0963">Cytoplasm</keyword>
<keyword id="KW-0498">Mitosis</keyword>
<keyword id="KW-0597">Phosphoprotein</keyword>
<keyword id="KW-1185">Reference proteome</keyword>
<keyword id="KW-0677">Repeat</keyword>
<keyword id="KW-0853">WD repeat</keyword>
<name>2ABD_MOUSE</name>